<feature type="chain" id="PRO_1000126691" description="Large ribosomal subunit protein bL31">
    <location>
        <begin position="1"/>
        <end position="94"/>
    </location>
</feature>
<feature type="region of interest" description="Disordered" evidence="2">
    <location>
        <begin position="65"/>
        <end position="94"/>
    </location>
</feature>
<feature type="compositionally biased region" description="Basic and acidic residues" evidence="2">
    <location>
        <begin position="74"/>
        <end position="94"/>
    </location>
</feature>
<sequence>MPKEDIHPTWYPDAKVICNGEVVMTTGSTQPEIHVDVWSGNHPFFTGTQKILDTEGRVDRFMRKYGMADSENDSTDKKKTTNEKKVSDSPSKES</sequence>
<dbReference type="EMBL" id="CP000878">
    <property type="protein sequence ID" value="ABX09581.1"/>
    <property type="molecule type" value="Genomic_DNA"/>
</dbReference>
<dbReference type="RefSeq" id="WP_012196202.1">
    <property type="nucleotide sequence ID" value="NC_009976.1"/>
</dbReference>
<dbReference type="STRING" id="93059.P9211_16501"/>
<dbReference type="KEGG" id="pmj:P9211_16501"/>
<dbReference type="eggNOG" id="COG0254">
    <property type="taxonomic scope" value="Bacteria"/>
</dbReference>
<dbReference type="HOGENOM" id="CLU_114306_1_2_3"/>
<dbReference type="OrthoDB" id="9803251at2"/>
<dbReference type="Proteomes" id="UP000000788">
    <property type="component" value="Chromosome"/>
</dbReference>
<dbReference type="GO" id="GO:1990904">
    <property type="term" value="C:ribonucleoprotein complex"/>
    <property type="evidence" value="ECO:0007669"/>
    <property type="project" value="UniProtKB-KW"/>
</dbReference>
<dbReference type="GO" id="GO:0005840">
    <property type="term" value="C:ribosome"/>
    <property type="evidence" value="ECO:0007669"/>
    <property type="project" value="UniProtKB-KW"/>
</dbReference>
<dbReference type="GO" id="GO:0019843">
    <property type="term" value="F:rRNA binding"/>
    <property type="evidence" value="ECO:0007669"/>
    <property type="project" value="UniProtKB-KW"/>
</dbReference>
<dbReference type="GO" id="GO:0003735">
    <property type="term" value="F:structural constituent of ribosome"/>
    <property type="evidence" value="ECO:0007669"/>
    <property type="project" value="InterPro"/>
</dbReference>
<dbReference type="GO" id="GO:0006412">
    <property type="term" value="P:translation"/>
    <property type="evidence" value="ECO:0007669"/>
    <property type="project" value="UniProtKB-UniRule"/>
</dbReference>
<dbReference type="Gene3D" id="4.10.830.30">
    <property type="entry name" value="Ribosomal protein L31"/>
    <property type="match status" value="1"/>
</dbReference>
<dbReference type="HAMAP" id="MF_00501">
    <property type="entry name" value="Ribosomal_bL31_1"/>
    <property type="match status" value="1"/>
</dbReference>
<dbReference type="InterPro" id="IPR034704">
    <property type="entry name" value="Ribosomal_bL28/bL31-like_sf"/>
</dbReference>
<dbReference type="InterPro" id="IPR002150">
    <property type="entry name" value="Ribosomal_bL31"/>
</dbReference>
<dbReference type="InterPro" id="IPR027491">
    <property type="entry name" value="Ribosomal_bL31_A"/>
</dbReference>
<dbReference type="InterPro" id="IPR042105">
    <property type="entry name" value="Ribosomal_bL31_sf"/>
</dbReference>
<dbReference type="NCBIfam" id="TIGR00105">
    <property type="entry name" value="L31"/>
    <property type="match status" value="1"/>
</dbReference>
<dbReference type="NCBIfam" id="NF000612">
    <property type="entry name" value="PRK00019.1"/>
    <property type="match status" value="1"/>
</dbReference>
<dbReference type="NCBIfam" id="NF001809">
    <property type="entry name" value="PRK00528.1"/>
    <property type="match status" value="1"/>
</dbReference>
<dbReference type="PANTHER" id="PTHR33280">
    <property type="entry name" value="50S RIBOSOMAL PROTEIN L31, CHLOROPLASTIC"/>
    <property type="match status" value="1"/>
</dbReference>
<dbReference type="PANTHER" id="PTHR33280:SF1">
    <property type="entry name" value="LARGE RIBOSOMAL SUBUNIT PROTEIN BL31C"/>
    <property type="match status" value="1"/>
</dbReference>
<dbReference type="Pfam" id="PF01197">
    <property type="entry name" value="Ribosomal_L31"/>
    <property type="match status" value="1"/>
</dbReference>
<dbReference type="PRINTS" id="PR01249">
    <property type="entry name" value="RIBOSOMALL31"/>
</dbReference>
<dbReference type="SUPFAM" id="SSF143800">
    <property type="entry name" value="L28p-like"/>
    <property type="match status" value="1"/>
</dbReference>
<dbReference type="PROSITE" id="PS01143">
    <property type="entry name" value="RIBOSOMAL_L31"/>
    <property type="match status" value="1"/>
</dbReference>
<evidence type="ECO:0000255" key="1">
    <source>
        <dbReference type="HAMAP-Rule" id="MF_00501"/>
    </source>
</evidence>
<evidence type="ECO:0000256" key="2">
    <source>
        <dbReference type="SAM" id="MobiDB-lite"/>
    </source>
</evidence>
<evidence type="ECO:0000305" key="3"/>
<comment type="function">
    <text evidence="1">Binds the 23S rRNA.</text>
</comment>
<comment type="subunit">
    <text evidence="1">Part of the 50S ribosomal subunit.</text>
</comment>
<comment type="similarity">
    <text evidence="1">Belongs to the bacterial ribosomal protein bL31 family. Type A subfamily.</text>
</comment>
<reference key="1">
    <citation type="journal article" date="2007" name="PLoS Genet.">
        <title>Patterns and implications of gene gain and loss in the evolution of Prochlorococcus.</title>
        <authorList>
            <person name="Kettler G.C."/>
            <person name="Martiny A.C."/>
            <person name="Huang K."/>
            <person name="Zucker J."/>
            <person name="Coleman M.L."/>
            <person name="Rodrigue S."/>
            <person name="Chen F."/>
            <person name="Lapidus A."/>
            <person name="Ferriera S."/>
            <person name="Johnson J."/>
            <person name="Steglich C."/>
            <person name="Church G.M."/>
            <person name="Richardson P."/>
            <person name="Chisholm S.W."/>
        </authorList>
    </citation>
    <scope>NUCLEOTIDE SEQUENCE [LARGE SCALE GENOMIC DNA]</scope>
    <source>
        <strain>MIT 9211</strain>
    </source>
</reference>
<protein>
    <recommendedName>
        <fullName evidence="1">Large ribosomal subunit protein bL31</fullName>
    </recommendedName>
    <alternativeName>
        <fullName evidence="3">50S ribosomal protein L31</fullName>
    </alternativeName>
</protein>
<keyword id="KW-1185">Reference proteome</keyword>
<keyword id="KW-0687">Ribonucleoprotein</keyword>
<keyword id="KW-0689">Ribosomal protein</keyword>
<keyword id="KW-0694">RNA-binding</keyword>
<keyword id="KW-0699">rRNA-binding</keyword>
<gene>
    <name evidence="1" type="primary">rpmE</name>
    <name evidence="1" type="synonym">rpl31</name>
    <name type="ordered locus">P9211_16501</name>
</gene>
<proteinExistence type="inferred from homology"/>
<organism>
    <name type="scientific">Prochlorococcus marinus (strain MIT 9211)</name>
    <dbReference type="NCBI Taxonomy" id="93059"/>
    <lineage>
        <taxon>Bacteria</taxon>
        <taxon>Bacillati</taxon>
        <taxon>Cyanobacteriota</taxon>
        <taxon>Cyanophyceae</taxon>
        <taxon>Synechococcales</taxon>
        <taxon>Prochlorococcaceae</taxon>
        <taxon>Prochlorococcus</taxon>
    </lineage>
</organism>
<name>RL31_PROM4</name>
<accession>A9BCL9</accession>